<proteinExistence type="evidence at protein level"/>
<organism>
    <name type="scientific">Bos taurus</name>
    <name type="common">Bovine</name>
    <dbReference type="NCBI Taxonomy" id="9913"/>
    <lineage>
        <taxon>Eukaryota</taxon>
        <taxon>Metazoa</taxon>
        <taxon>Chordata</taxon>
        <taxon>Craniata</taxon>
        <taxon>Vertebrata</taxon>
        <taxon>Euteleostomi</taxon>
        <taxon>Mammalia</taxon>
        <taxon>Eutheria</taxon>
        <taxon>Laurasiatheria</taxon>
        <taxon>Artiodactyla</taxon>
        <taxon>Ruminantia</taxon>
        <taxon>Pecora</taxon>
        <taxon>Bovidae</taxon>
        <taxon>Bovinae</taxon>
        <taxon>Bos</taxon>
    </lineage>
</organism>
<sequence>MAERGYSFSLTTFSPSGKLVQIEYALAAVAGGAPSVGIKAANGVVLATEKKQKSILYDERSVHKVEPITKHIGLVYSGMGPDYRVLVHRARKLAQQYYLVYQEPIPTAQLVQRVASVMQEYTQSGGVRPFGVSLLICGWNEGRPYLFQSDPSGAYFAWKATAMGKNYVNGKTFLEKRYNEDLELEDAIHTAILTLKESFEGQMTEDNIEVGICNEAGFRRLTPTEVKDYLAAIA</sequence>
<name>PSA2_BOVIN</name>
<protein>
    <recommendedName>
        <fullName>Proteasome subunit alpha type-2</fullName>
    </recommendedName>
</protein>
<gene>
    <name type="primary">PSMA2</name>
</gene>
<dbReference type="EMBL" id="BC102206">
    <property type="protein sequence ID" value="AAI02207.1"/>
    <property type="molecule type" value="mRNA"/>
</dbReference>
<dbReference type="RefSeq" id="NP_001029834.1">
    <property type="nucleotide sequence ID" value="NM_001034662.2"/>
</dbReference>
<dbReference type="PDB" id="1IRU">
    <property type="method" value="X-ray"/>
    <property type="resolution" value="2.75 A"/>
    <property type="chains" value="B/P=2-234"/>
</dbReference>
<dbReference type="PDB" id="7DR6">
    <property type="method" value="EM"/>
    <property type="resolution" value="4.10 A"/>
    <property type="chains" value="M/f=1-234"/>
</dbReference>
<dbReference type="PDB" id="7DR7">
    <property type="method" value="EM"/>
    <property type="resolution" value="3.30 A"/>
    <property type="chains" value="F/M=1-234"/>
</dbReference>
<dbReference type="PDB" id="7DRW">
    <property type="method" value="EM"/>
    <property type="resolution" value="4.20 A"/>
    <property type="chains" value="B/h=1-234"/>
</dbReference>
<dbReference type="PDB" id="8AZK">
    <property type="method" value="EM"/>
    <property type="resolution" value="3.10 A"/>
    <property type="chains" value="B/P=2-234"/>
</dbReference>
<dbReference type="PDB" id="8FZ5">
    <property type="method" value="EM"/>
    <property type="resolution" value="2.23 A"/>
    <property type="chains" value="B/P=1-234"/>
</dbReference>
<dbReference type="PDB" id="8FZ6">
    <property type="method" value="EM"/>
    <property type="resolution" value="2.54 A"/>
    <property type="chains" value="B/P=1-234"/>
</dbReference>
<dbReference type="PDBsum" id="1IRU"/>
<dbReference type="PDBsum" id="7DR6"/>
<dbReference type="PDBsum" id="7DR7"/>
<dbReference type="PDBsum" id="7DRW"/>
<dbReference type="PDBsum" id="8AZK"/>
<dbReference type="PDBsum" id="8FZ5"/>
<dbReference type="PDBsum" id="8FZ6"/>
<dbReference type="EMDB" id="EMD-15767"/>
<dbReference type="EMDB" id="EMD-29603"/>
<dbReference type="EMDB" id="EMD-29604"/>
<dbReference type="EMDB" id="EMD-30824"/>
<dbReference type="EMDB" id="EMD-30825"/>
<dbReference type="EMDB" id="EMD-30828"/>
<dbReference type="SMR" id="Q3T0Y5"/>
<dbReference type="BioGRID" id="195708">
    <property type="interactions" value="3"/>
</dbReference>
<dbReference type="FunCoup" id="Q3T0Y5">
    <property type="interactions" value="3663"/>
</dbReference>
<dbReference type="STRING" id="9913.ENSBTAP00000001309"/>
<dbReference type="MEROPS" id="T01.972"/>
<dbReference type="PaxDb" id="9913-ENSBTAP00000001309"/>
<dbReference type="PeptideAtlas" id="Q3T0Y5"/>
<dbReference type="Ensembl" id="ENSBTAT00000001309.6">
    <property type="protein sequence ID" value="ENSBTAP00000001309.5"/>
    <property type="gene ID" value="ENSBTAG00000000990.7"/>
</dbReference>
<dbReference type="GeneID" id="539141"/>
<dbReference type="KEGG" id="bta:539141"/>
<dbReference type="CTD" id="5683"/>
<dbReference type="VEuPathDB" id="HostDB:ENSBTAG00000000990"/>
<dbReference type="VGNC" id="VGNC:55751">
    <property type="gene designation" value="PSMA2"/>
</dbReference>
<dbReference type="eggNOG" id="KOG0181">
    <property type="taxonomic scope" value="Eukaryota"/>
</dbReference>
<dbReference type="GeneTree" id="ENSGT00550000074870"/>
<dbReference type="HOGENOM" id="CLU_035750_4_1_1"/>
<dbReference type="InParanoid" id="Q3T0Y5"/>
<dbReference type="OMA" id="ATCIGKD"/>
<dbReference type="OrthoDB" id="431557at2759"/>
<dbReference type="TreeFam" id="TF106207"/>
<dbReference type="Reactome" id="R-BTA-1169091">
    <property type="pathway name" value="Activation of NF-kappaB in B cells"/>
</dbReference>
<dbReference type="Reactome" id="R-BTA-1234176">
    <property type="pathway name" value="Oxygen-dependent proline hydroxylation of Hypoxia-inducible Factor Alpha"/>
</dbReference>
<dbReference type="Reactome" id="R-BTA-1236978">
    <property type="pathway name" value="Cross-presentation of soluble exogenous antigens (endosomes)"/>
</dbReference>
<dbReference type="Reactome" id="R-BTA-174084">
    <property type="pathway name" value="Autodegradation of Cdh1 by Cdh1:APC/C"/>
</dbReference>
<dbReference type="Reactome" id="R-BTA-174154">
    <property type="pathway name" value="APC/C:Cdc20 mediated degradation of Securin"/>
</dbReference>
<dbReference type="Reactome" id="R-BTA-174178">
    <property type="pathway name" value="APC/C:Cdh1 mediated degradation of Cdc20 and other APC/C:Cdh1 targeted proteins in late mitosis/early G1"/>
</dbReference>
<dbReference type="Reactome" id="R-BTA-174184">
    <property type="pathway name" value="Cdc20:Phospho-APC/C mediated degradation of Cyclin A"/>
</dbReference>
<dbReference type="Reactome" id="R-BTA-187577">
    <property type="pathway name" value="SCF(Skp2)-mediated degradation of p27/p21"/>
</dbReference>
<dbReference type="Reactome" id="R-BTA-195253">
    <property type="pathway name" value="Degradation of beta-catenin by the destruction complex"/>
</dbReference>
<dbReference type="Reactome" id="R-BTA-202424">
    <property type="pathway name" value="Downstream TCR signaling"/>
</dbReference>
<dbReference type="Reactome" id="R-BTA-2467813">
    <property type="pathway name" value="Separation of Sister Chromatids"/>
</dbReference>
<dbReference type="Reactome" id="R-BTA-2871837">
    <property type="pathway name" value="FCERI mediated NF-kB activation"/>
</dbReference>
<dbReference type="Reactome" id="R-BTA-349425">
    <property type="pathway name" value="Autodegradation of the E3 ubiquitin ligase COP1"/>
</dbReference>
<dbReference type="Reactome" id="R-BTA-350562">
    <property type="pathway name" value="Regulation of ornithine decarboxylase (ODC)"/>
</dbReference>
<dbReference type="Reactome" id="R-BTA-382556">
    <property type="pathway name" value="ABC-family proteins mediated transport"/>
</dbReference>
<dbReference type="Reactome" id="R-BTA-450408">
    <property type="pathway name" value="AUF1 (hnRNP D0) binds and destabilizes mRNA"/>
</dbReference>
<dbReference type="Reactome" id="R-BTA-4608870">
    <property type="pathway name" value="Asymmetric localization of PCP proteins"/>
</dbReference>
<dbReference type="Reactome" id="R-BTA-4641257">
    <property type="pathway name" value="Degradation of AXIN"/>
</dbReference>
<dbReference type="Reactome" id="R-BTA-4641258">
    <property type="pathway name" value="Degradation of DVL"/>
</dbReference>
<dbReference type="Reactome" id="R-BTA-5358346">
    <property type="pathway name" value="Hedgehog ligand biogenesis"/>
</dbReference>
<dbReference type="Reactome" id="R-BTA-5607761">
    <property type="pathway name" value="Dectin-1 mediated noncanonical NF-kB signaling"/>
</dbReference>
<dbReference type="Reactome" id="R-BTA-5607764">
    <property type="pathway name" value="CLEC7A (Dectin-1) signaling"/>
</dbReference>
<dbReference type="Reactome" id="R-BTA-5610780">
    <property type="pathway name" value="Degradation of GLI1 by the proteasome"/>
</dbReference>
<dbReference type="Reactome" id="R-BTA-5610785">
    <property type="pathway name" value="GLI3 is processed to GLI3R by the proteasome"/>
</dbReference>
<dbReference type="Reactome" id="R-BTA-5632684">
    <property type="pathway name" value="Hedgehog 'on' state"/>
</dbReference>
<dbReference type="Reactome" id="R-BTA-5668541">
    <property type="pathway name" value="TNFR2 non-canonical NF-kB pathway"/>
</dbReference>
<dbReference type="Reactome" id="R-BTA-5676590">
    <property type="pathway name" value="NIK--&gt;noncanonical NF-kB signaling"/>
</dbReference>
<dbReference type="Reactome" id="R-BTA-5687128">
    <property type="pathway name" value="MAPK6/MAPK4 signaling"/>
</dbReference>
<dbReference type="Reactome" id="R-BTA-5689603">
    <property type="pathway name" value="UCH proteinases"/>
</dbReference>
<dbReference type="Reactome" id="R-BTA-5689880">
    <property type="pathway name" value="Ub-specific processing proteases"/>
</dbReference>
<dbReference type="Reactome" id="R-BTA-6798695">
    <property type="pathway name" value="Neutrophil degranulation"/>
</dbReference>
<dbReference type="Reactome" id="R-BTA-68867">
    <property type="pathway name" value="Assembly of the pre-replicative complex"/>
</dbReference>
<dbReference type="Reactome" id="R-BTA-68949">
    <property type="pathway name" value="Orc1 removal from chromatin"/>
</dbReference>
<dbReference type="Reactome" id="R-BTA-69017">
    <property type="pathway name" value="CDK-mediated phosphorylation and removal of Cdc6"/>
</dbReference>
<dbReference type="Reactome" id="R-BTA-69481">
    <property type="pathway name" value="G2/M Checkpoints"/>
</dbReference>
<dbReference type="Reactome" id="R-BTA-69601">
    <property type="pathway name" value="Ubiquitin Mediated Degradation of Phosphorylated Cdc25A"/>
</dbReference>
<dbReference type="Reactome" id="R-BTA-75815">
    <property type="pathway name" value="Ubiquitin-dependent degradation of Cyclin D"/>
</dbReference>
<dbReference type="Reactome" id="R-BTA-8852276">
    <property type="pathway name" value="The role of GTSE1 in G2/M progression after G2 checkpoint"/>
</dbReference>
<dbReference type="Reactome" id="R-BTA-8854050">
    <property type="pathway name" value="FBXL7 down-regulates AURKA during mitotic entry and in early mitosis"/>
</dbReference>
<dbReference type="Reactome" id="R-BTA-8939236">
    <property type="pathway name" value="RUNX1 regulates transcription of genes involved in differentiation of HSCs"/>
</dbReference>
<dbReference type="Reactome" id="R-BTA-8939902">
    <property type="pathway name" value="Regulation of RUNX2 expression and activity"/>
</dbReference>
<dbReference type="Reactome" id="R-BTA-8941858">
    <property type="pathway name" value="Regulation of RUNX3 expression and activity"/>
</dbReference>
<dbReference type="Reactome" id="R-BTA-8948751">
    <property type="pathway name" value="Regulation of PTEN stability and activity"/>
</dbReference>
<dbReference type="Reactome" id="R-BTA-8951664">
    <property type="pathway name" value="Neddylation"/>
</dbReference>
<dbReference type="Reactome" id="R-BTA-9020702">
    <property type="pathway name" value="Interleukin-1 signaling"/>
</dbReference>
<dbReference type="Reactome" id="R-BTA-9755511">
    <property type="pathway name" value="KEAP1-NFE2L2 pathway"/>
</dbReference>
<dbReference type="Reactome" id="R-BTA-9762114">
    <property type="pathway name" value="GSK3B and BTRC:CUL1-mediated-degradation of NFE2L2"/>
</dbReference>
<dbReference type="Reactome" id="R-BTA-983168">
    <property type="pathway name" value="Antigen processing: Ubiquitination &amp; Proteasome degradation"/>
</dbReference>
<dbReference type="Reactome" id="R-BTA-9907900">
    <property type="pathway name" value="Proteasome assembly"/>
</dbReference>
<dbReference type="EvolutionaryTrace" id="Q3T0Y5"/>
<dbReference type="Proteomes" id="UP000009136">
    <property type="component" value="Chromosome 4"/>
</dbReference>
<dbReference type="Bgee" id="ENSBTAG00000000990">
    <property type="expression patterns" value="Expressed in tongue muscle and 104 other cell types or tissues"/>
</dbReference>
<dbReference type="GO" id="GO:0005829">
    <property type="term" value="C:cytosol"/>
    <property type="evidence" value="ECO:0000304"/>
    <property type="project" value="Reactome"/>
</dbReference>
<dbReference type="GO" id="GO:0005634">
    <property type="term" value="C:nucleus"/>
    <property type="evidence" value="ECO:0007669"/>
    <property type="project" value="UniProtKB-SubCell"/>
</dbReference>
<dbReference type="GO" id="GO:0000932">
    <property type="term" value="C:P-body"/>
    <property type="evidence" value="ECO:0000250"/>
    <property type="project" value="UniProtKB"/>
</dbReference>
<dbReference type="GO" id="GO:0005839">
    <property type="term" value="C:proteasome core complex"/>
    <property type="evidence" value="ECO:0000250"/>
    <property type="project" value="UniProtKB"/>
</dbReference>
<dbReference type="GO" id="GO:0019773">
    <property type="term" value="C:proteasome core complex, alpha-subunit complex"/>
    <property type="evidence" value="ECO:0000250"/>
    <property type="project" value="UniProtKB"/>
</dbReference>
<dbReference type="GO" id="GO:0043161">
    <property type="term" value="P:proteasome-mediated ubiquitin-dependent protein catabolic process"/>
    <property type="evidence" value="ECO:0000318"/>
    <property type="project" value="GO_Central"/>
</dbReference>
<dbReference type="CDD" id="cd03750">
    <property type="entry name" value="proteasome_alpha_type_2"/>
    <property type="match status" value="1"/>
</dbReference>
<dbReference type="FunFam" id="3.60.20.10:FF:000012">
    <property type="entry name" value="Proteasome subunit alpha type"/>
    <property type="match status" value="1"/>
</dbReference>
<dbReference type="Gene3D" id="3.60.20.10">
    <property type="entry name" value="Glutamine Phosphoribosylpyrophosphate, subunit 1, domain 1"/>
    <property type="match status" value="1"/>
</dbReference>
<dbReference type="InterPro" id="IPR029055">
    <property type="entry name" value="Ntn_hydrolases_N"/>
</dbReference>
<dbReference type="InterPro" id="IPR050115">
    <property type="entry name" value="Proteasome_alpha"/>
</dbReference>
<dbReference type="InterPro" id="IPR023332">
    <property type="entry name" value="Proteasome_alpha-type"/>
</dbReference>
<dbReference type="InterPro" id="IPR000426">
    <property type="entry name" value="Proteasome_asu_N"/>
</dbReference>
<dbReference type="InterPro" id="IPR001353">
    <property type="entry name" value="Proteasome_sua/b"/>
</dbReference>
<dbReference type="NCBIfam" id="NF003075">
    <property type="entry name" value="PRK03996.1"/>
    <property type="match status" value="1"/>
</dbReference>
<dbReference type="PANTHER" id="PTHR11599">
    <property type="entry name" value="PROTEASOME SUBUNIT ALPHA/BETA"/>
    <property type="match status" value="1"/>
</dbReference>
<dbReference type="Pfam" id="PF00227">
    <property type="entry name" value="Proteasome"/>
    <property type="match status" value="1"/>
</dbReference>
<dbReference type="Pfam" id="PF10584">
    <property type="entry name" value="Proteasome_A_N"/>
    <property type="match status" value="1"/>
</dbReference>
<dbReference type="SMART" id="SM00948">
    <property type="entry name" value="Proteasome_A_N"/>
    <property type="match status" value="1"/>
</dbReference>
<dbReference type="SUPFAM" id="SSF56235">
    <property type="entry name" value="N-terminal nucleophile aminohydrolases (Ntn hydrolases)"/>
    <property type="match status" value="1"/>
</dbReference>
<dbReference type="PROSITE" id="PS00388">
    <property type="entry name" value="PROTEASOME_ALPHA_1"/>
    <property type="match status" value="1"/>
</dbReference>
<dbReference type="PROSITE" id="PS51475">
    <property type="entry name" value="PROTEASOME_ALPHA_2"/>
    <property type="match status" value="1"/>
</dbReference>
<keyword id="KW-0002">3D-structure</keyword>
<keyword id="KW-0007">Acetylation</keyword>
<keyword id="KW-0963">Cytoplasm</keyword>
<keyword id="KW-0539">Nucleus</keyword>
<keyword id="KW-0597">Phosphoprotein</keyword>
<keyword id="KW-0647">Proteasome</keyword>
<keyword id="KW-1185">Reference proteome</keyword>
<reference key="1">
    <citation type="submission" date="2005-08" db="EMBL/GenBank/DDBJ databases">
        <authorList>
            <consortium name="NIH - Mammalian Gene Collection (MGC) project"/>
        </authorList>
    </citation>
    <scope>NUCLEOTIDE SEQUENCE [LARGE SCALE MRNA]</scope>
    <source>
        <strain>Crossbred X Angus</strain>
        <tissue>Ileum</tissue>
    </source>
</reference>
<reference key="2">
    <citation type="journal article" date="2002" name="Structure">
        <title>The structure of the mammalian 20S proteasome at 2.75 A resolution.</title>
        <authorList>
            <person name="Unno M."/>
            <person name="Mizushima T."/>
            <person name="Morimoto Y."/>
            <person name="Tomisugi Y."/>
            <person name="Tanaka K."/>
            <person name="Yasuoka N."/>
            <person name="Tsukihara T."/>
        </authorList>
    </citation>
    <scope>X-RAY CRYSTALLOGRAPHY (2.75 ANGSTROMS) OF COMPLEX WITH THE 20S PROTEASOME</scope>
</reference>
<comment type="function">
    <text evidence="2">Component of the 20S core proteasome complex involved in the proteolytic degradation of most intracellular proteins. This complex plays numerous essential roles within the cell by associating with different regulatory particles. Associated with two 19S regulatory particles, forms the 26S proteasome and thus participates in the ATP-dependent degradation of ubiquitinated proteins. The 26S proteasome plays a key role in the maintenance of protein homeostasis by removing misfolded or damaged proteins that could impair cellular functions, and by removing proteins whose functions are no longer required. Associated with the PA200 or PA28, the 20S proteasome mediates ubiquitin-independent protein degradation. This type of proteolysis is required in several pathways including spermatogenesis (20S-PA200 complex) or generation of a subset of MHC class I-presented antigenic peptides (20S-PA28 complex).</text>
</comment>
<comment type="subunit">
    <text evidence="5">The 26S proteasome consists of a 20S proteasome core and two 19S regulatory subunits. The 20S proteasome core is a barrel-shaped complex made of 28 subunits that are arranged in four stacked rings. The two outer rings are each formed by seven alpha subunits, and the two inner rings are formed by seven beta subunits. The proteolytic activity is exerted by three beta-subunits PSMB5, PSMB6 and PSMB7.</text>
</comment>
<comment type="subcellular location">
    <subcellularLocation>
        <location evidence="2">Cytoplasm</location>
    </subcellularLocation>
    <subcellularLocation>
        <location evidence="2">Nucleus</location>
    </subcellularLocation>
    <text evidence="2 3">Translocated from the cytoplasm into the nucleus following interaction with AKIRIN2, which bridges the proteasome with the nuclear import receptor IPO9 (By similarity). Colocalizes with TRIM5 in cytoplasmic bodies (By similarity).</text>
</comment>
<comment type="PTM">
    <text evidence="1">Phosphorylated on tyrosine residues; which may be important for nuclear import.</text>
</comment>
<comment type="similarity">
    <text evidence="4">Belongs to the peptidase T1A family.</text>
</comment>
<accession>Q3T0Y5</accession>
<evidence type="ECO:0000250" key="1">
    <source>
        <dbReference type="UniProtKB" id="P17220"/>
    </source>
</evidence>
<evidence type="ECO:0000250" key="2">
    <source>
        <dbReference type="UniProtKB" id="P25787"/>
    </source>
</evidence>
<evidence type="ECO:0000250" key="3">
    <source>
        <dbReference type="UniProtKB" id="P49722"/>
    </source>
</evidence>
<evidence type="ECO:0000255" key="4">
    <source>
        <dbReference type="PROSITE-ProRule" id="PRU00808"/>
    </source>
</evidence>
<evidence type="ECO:0000269" key="5">
    <source>
    </source>
</evidence>
<evidence type="ECO:0007829" key="6">
    <source>
        <dbReference type="PDB" id="1IRU"/>
    </source>
</evidence>
<evidence type="ECO:0007829" key="7">
    <source>
        <dbReference type="PDB" id="8FZ5"/>
    </source>
</evidence>
<feature type="initiator methionine" description="Removed" evidence="2">
    <location>
        <position position="1"/>
    </location>
</feature>
<feature type="chain" id="PRO_0000239865" description="Proteasome subunit alpha type-2">
    <location>
        <begin position="2"/>
        <end position="234"/>
    </location>
</feature>
<feature type="modified residue" description="N-acetylalanine" evidence="2">
    <location>
        <position position="2"/>
    </location>
</feature>
<feature type="modified residue" description="Phosphotyrosine" evidence="3">
    <location>
        <position position="6"/>
    </location>
</feature>
<feature type="modified residue" description="Phosphoserine" evidence="2">
    <location>
        <position position="7"/>
    </location>
</feature>
<feature type="modified residue" description="Phosphoserine" evidence="2">
    <location>
        <position position="14"/>
    </location>
</feature>
<feature type="modified residue" description="Phosphoserine" evidence="2">
    <location>
        <position position="16"/>
    </location>
</feature>
<feature type="modified residue" description="Phosphotyrosine" evidence="2">
    <location>
        <position position="24"/>
    </location>
</feature>
<feature type="modified residue" description="N6-acetyllysine" evidence="2">
    <location>
        <position position="70"/>
    </location>
</feature>
<feature type="modified residue" description="Phosphotyrosine" evidence="2">
    <location>
        <position position="76"/>
    </location>
</feature>
<feature type="modified residue" description="Phosphotyrosine" evidence="1">
    <location>
        <position position="121"/>
    </location>
</feature>
<feature type="modified residue" description="N6-acetyllysine" evidence="2">
    <location>
        <position position="171"/>
    </location>
</feature>
<feature type="strand" evidence="6">
    <location>
        <begin position="8"/>
        <end position="10"/>
    </location>
</feature>
<feature type="helix" evidence="7">
    <location>
        <begin position="20"/>
        <end position="30"/>
    </location>
</feature>
<feature type="strand" evidence="7">
    <location>
        <begin position="35"/>
        <end position="39"/>
    </location>
</feature>
<feature type="strand" evidence="7">
    <location>
        <begin position="44"/>
        <end position="49"/>
    </location>
</feature>
<feature type="strand" evidence="6">
    <location>
        <begin position="55"/>
        <end position="57"/>
    </location>
</feature>
<feature type="turn" evidence="7">
    <location>
        <begin position="59"/>
        <end position="61"/>
    </location>
</feature>
<feature type="strand" evidence="7">
    <location>
        <begin position="64"/>
        <end position="78"/>
    </location>
</feature>
<feature type="helix" evidence="7">
    <location>
        <begin position="80"/>
        <end position="101"/>
    </location>
</feature>
<feature type="helix" evidence="7">
    <location>
        <begin position="107"/>
        <end position="123"/>
    </location>
</feature>
<feature type="strand" evidence="7">
    <location>
        <begin position="132"/>
        <end position="140"/>
    </location>
</feature>
<feature type="strand" evidence="7">
    <location>
        <begin position="143"/>
        <end position="149"/>
    </location>
</feature>
<feature type="strand" evidence="7">
    <location>
        <begin position="155"/>
        <end position="164"/>
    </location>
</feature>
<feature type="helix" evidence="7">
    <location>
        <begin position="167"/>
        <end position="177"/>
    </location>
</feature>
<feature type="helix" evidence="7">
    <location>
        <begin position="184"/>
        <end position="198"/>
    </location>
</feature>
<feature type="turn" evidence="7">
    <location>
        <begin position="205"/>
        <end position="207"/>
    </location>
</feature>
<feature type="strand" evidence="7">
    <location>
        <begin position="208"/>
        <end position="214"/>
    </location>
</feature>
<feature type="strand" evidence="7">
    <location>
        <begin position="217"/>
        <end position="220"/>
    </location>
</feature>
<feature type="helix" evidence="7">
    <location>
        <begin position="223"/>
        <end position="232"/>
    </location>
</feature>